<sequence length="313" mass="36140">MRWSIIFTALLLTLCISPPAEELSREEYCSKVWRYDYECALNYILNDEEVQKVAAVAEKLKGVDCKDTAWKILEWEDENLVYDVEKASLPPPQIVVRGKEVEVYDTGRYIQTPSETIMLRKGICTDYAFLTLALLKYNGCKGYLVNVTFENDDVGHVAAAIAVNGTYFILDQHLPPFDPQGYFIKWLRDGKRIEKAEIIDNNTTIPLNLSIGYVASDRDAKSLESRIRQYFKGTGIREDPRLNGEKLPLGYREGYTLKLSLEMAEYYHPEFERQYAEHIYKLLEESIEGRFKAFNLHLSIKGDVMEIVLYLAR</sequence>
<comment type="similarity">
    <text evidence="1">Belongs to the UPF0252 family.</text>
</comment>
<protein>
    <recommendedName>
        <fullName>UPF0252 protein AF_0384</fullName>
    </recommendedName>
</protein>
<reference key="1">
    <citation type="journal article" date="1997" name="Nature">
        <title>The complete genome sequence of the hyperthermophilic, sulphate-reducing archaeon Archaeoglobus fulgidus.</title>
        <authorList>
            <person name="Klenk H.-P."/>
            <person name="Clayton R.A."/>
            <person name="Tomb J.-F."/>
            <person name="White O."/>
            <person name="Nelson K.E."/>
            <person name="Ketchum K.A."/>
            <person name="Dodson R.J."/>
            <person name="Gwinn M.L."/>
            <person name="Hickey E.K."/>
            <person name="Peterson J.D."/>
            <person name="Richardson D.L."/>
            <person name="Kerlavage A.R."/>
            <person name="Graham D.E."/>
            <person name="Kyrpides N.C."/>
            <person name="Fleischmann R.D."/>
            <person name="Quackenbush J."/>
            <person name="Lee N.H."/>
            <person name="Sutton G.G."/>
            <person name="Gill S.R."/>
            <person name="Kirkness E.F."/>
            <person name="Dougherty B.A."/>
            <person name="McKenney K."/>
            <person name="Adams M.D."/>
            <person name="Loftus B.J."/>
            <person name="Peterson S.N."/>
            <person name="Reich C.I."/>
            <person name="McNeil L.K."/>
            <person name="Badger J.H."/>
            <person name="Glodek A."/>
            <person name="Zhou L."/>
            <person name="Overbeek R."/>
            <person name="Gocayne J.D."/>
            <person name="Weidman J.F."/>
            <person name="McDonald L.A."/>
            <person name="Utterback T.R."/>
            <person name="Cotton M.D."/>
            <person name="Spriggs T."/>
            <person name="Artiach P."/>
            <person name="Kaine B.P."/>
            <person name="Sykes S.M."/>
            <person name="Sadow P.W."/>
            <person name="D'Andrea K.P."/>
            <person name="Bowman C."/>
            <person name="Fujii C."/>
            <person name="Garland S.A."/>
            <person name="Mason T.M."/>
            <person name="Olsen G.J."/>
            <person name="Fraser C.M."/>
            <person name="Smith H.O."/>
            <person name="Woese C.R."/>
            <person name="Venter J.C."/>
        </authorList>
    </citation>
    <scope>NUCLEOTIDE SEQUENCE [LARGE SCALE GENOMIC DNA]</scope>
    <source>
        <strain>ATCC 49558 / DSM 4304 / JCM 9628 / NBRC 100126 / VC-16</strain>
    </source>
</reference>
<evidence type="ECO:0000305" key="1"/>
<proteinExistence type="inferred from homology"/>
<accession>O29863</accession>
<gene>
    <name type="ordered locus">AF_0384</name>
</gene>
<name>Y384_ARCFU</name>
<dbReference type="EMBL" id="AE000782">
    <property type="protein sequence ID" value="AAB90853.1"/>
    <property type="molecule type" value="Genomic_DNA"/>
</dbReference>
<dbReference type="PIR" id="H69297">
    <property type="entry name" value="H69297"/>
</dbReference>
<dbReference type="RefSeq" id="WP_010877891.1">
    <property type="nucleotide sequence ID" value="NC_000917.1"/>
</dbReference>
<dbReference type="STRING" id="224325.AF_0384"/>
<dbReference type="PaxDb" id="224325-AF_0384"/>
<dbReference type="EnsemblBacteria" id="AAB90853">
    <property type="protein sequence ID" value="AAB90853"/>
    <property type="gene ID" value="AF_0384"/>
</dbReference>
<dbReference type="KEGG" id="afu:AF_0384"/>
<dbReference type="eggNOG" id="arCOG02164">
    <property type="taxonomic scope" value="Archaea"/>
</dbReference>
<dbReference type="HOGENOM" id="CLU_045499_0_0_2"/>
<dbReference type="OrthoDB" id="86147at2157"/>
<dbReference type="PhylomeDB" id="O29863"/>
<dbReference type="Proteomes" id="UP000002199">
    <property type="component" value="Chromosome"/>
</dbReference>
<dbReference type="Gene3D" id="3.10.620.30">
    <property type="match status" value="1"/>
</dbReference>
<dbReference type="InterPro" id="IPR038765">
    <property type="entry name" value="Papain-like_cys_pep_sf"/>
</dbReference>
<dbReference type="InterPro" id="IPR007562">
    <property type="entry name" value="Transglutaminase-like_domain"/>
</dbReference>
<dbReference type="Pfam" id="PF04473">
    <property type="entry name" value="DUF553"/>
    <property type="match status" value="1"/>
</dbReference>
<dbReference type="SUPFAM" id="SSF54001">
    <property type="entry name" value="Cysteine proteinases"/>
    <property type="match status" value="1"/>
</dbReference>
<keyword id="KW-1185">Reference proteome</keyword>
<organism>
    <name type="scientific">Archaeoglobus fulgidus (strain ATCC 49558 / DSM 4304 / JCM 9628 / NBRC 100126 / VC-16)</name>
    <dbReference type="NCBI Taxonomy" id="224325"/>
    <lineage>
        <taxon>Archaea</taxon>
        <taxon>Methanobacteriati</taxon>
        <taxon>Methanobacteriota</taxon>
        <taxon>Archaeoglobi</taxon>
        <taxon>Archaeoglobales</taxon>
        <taxon>Archaeoglobaceae</taxon>
        <taxon>Archaeoglobus</taxon>
    </lineage>
</organism>
<feature type="chain" id="PRO_0000159557" description="UPF0252 protein AF_0384">
    <location>
        <begin position="1"/>
        <end position="313"/>
    </location>
</feature>